<protein>
    <recommendedName>
        <fullName>Floral defensin-like protein 2</fullName>
    </recommendedName>
    <alternativeName>
        <fullName>PhD2</fullName>
    </alternativeName>
</protein>
<name>DEF2_PETHY</name>
<accession>Q8H6Q0</accession>
<keyword id="KW-0929">Antimicrobial</keyword>
<keyword id="KW-0903">Direct protein sequencing</keyword>
<keyword id="KW-1015">Disulfide bond</keyword>
<keyword id="KW-0295">Fungicide</keyword>
<keyword id="KW-0960">Knottin</keyword>
<keyword id="KW-0611">Plant defense</keyword>
<keyword id="KW-0964">Secreted</keyword>
<keyword id="KW-0732">Signal</keyword>
<keyword id="KW-0926">Vacuole</keyword>
<feature type="signal peptide" evidence="2">
    <location>
        <begin position="1"/>
        <end position="25"/>
    </location>
</feature>
<feature type="chain" id="PRO_0000007049" description="Floral defensin-like protein 2">
    <location>
        <begin position="26"/>
        <end position="74"/>
    </location>
</feature>
<feature type="propeptide" id="PRO_0000007050" description="Removed in mature form" evidence="1">
    <location>
        <begin position="75"/>
        <end position="101"/>
    </location>
</feature>
<feature type="disulfide bond" evidence="1">
    <location>
        <begin position="28"/>
        <end position="74"/>
    </location>
</feature>
<feature type="disulfide bond" evidence="1">
    <location>
        <begin position="32"/>
        <end position="48"/>
    </location>
</feature>
<feature type="disulfide bond" evidence="1">
    <location>
        <begin position="39"/>
        <end position="61"/>
    </location>
</feature>
<feature type="disulfide bond" evidence="1">
    <location>
        <begin position="45"/>
        <end position="68"/>
    </location>
</feature>
<feature type="disulfide bond" evidence="1">
    <location>
        <begin position="49"/>
        <end position="70"/>
    </location>
</feature>
<gene>
    <name type="primary">D2</name>
</gene>
<comment type="function">
    <text>Plant defense peptide with antifungal activity against F.oxysporum and B.cinerea.</text>
</comment>
<comment type="biophysicochemical properties">
    <phDependence>
        <text>Stable under extremes of pH.</text>
    </phDependence>
    <temperatureDependence>
        <text>Stable under extremes of temperature.</text>
    </temperatureDependence>
</comment>
<comment type="subcellular location">
    <subcellularLocation>
        <location evidence="1">Secreted</location>
    </subcellularLocation>
    <subcellularLocation>
        <location evidence="1">Vacuole</location>
    </subcellularLocation>
</comment>
<comment type="tissue specificity">
    <text>Petals.</text>
</comment>
<comment type="domain">
    <text evidence="1">The presence of a 'disulfide through disulfide knot' structurally defines this protein as a knottin.</text>
</comment>
<comment type="PTM">
    <text>When compared to other plant defensins, the petunia defensins have an additional fifth disulfide bond.</text>
</comment>
<comment type="similarity">
    <text evidence="3">Belongs to the DEFL family.</text>
</comment>
<dbReference type="EMBL" id="AF507976">
    <property type="protein sequence ID" value="AAN64751.1"/>
    <property type="molecule type" value="mRNA"/>
</dbReference>
<dbReference type="SMR" id="Q8H6Q0"/>
<dbReference type="GO" id="GO:0005576">
    <property type="term" value="C:extracellular region"/>
    <property type="evidence" value="ECO:0007669"/>
    <property type="project" value="UniProtKB-SubCell"/>
</dbReference>
<dbReference type="GO" id="GO:0005773">
    <property type="term" value="C:vacuole"/>
    <property type="evidence" value="ECO:0007669"/>
    <property type="project" value="UniProtKB-SubCell"/>
</dbReference>
<dbReference type="GO" id="GO:0050832">
    <property type="term" value="P:defense response to fungus"/>
    <property type="evidence" value="ECO:0007669"/>
    <property type="project" value="UniProtKB-KW"/>
</dbReference>
<dbReference type="GO" id="GO:0031640">
    <property type="term" value="P:killing of cells of another organism"/>
    <property type="evidence" value="ECO:0007669"/>
    <property type="project" value="UniProtKB-KW"/>
</dbReference>
<dbReference type="Gene3D" id="3.30.30.10">
    <property type="entry name" value="Knottin, scorpion toxin-like"/>
    <property type="match status" value="1"/>
</dbReference>
<dbReference type="InterPro" id="IPR036574">
    <property type="entry name" value="Scorpion_toxin-like_sf"/>
</dbReference>
<dbReference type="Pfam" id="PF00304">
    <property type="entry name" value="Gamma-thionin"/>
    <property type="match status" value="1"/>
</dbReference>
<dbReference type="SUPFAM" id="SSF57095">
    <property type="entry name" value="Scorpion toxin-like"/>
    <property type="match status" value="1"/>
</dbReference>
<reference key="1">
    <citation type="journal article" date="2003" name="Plant Physiol.">
        <title>Isolation and properties of floral defensins from ornamental tobacco and petunia.</title>
        <authorList>
            <person name="Lay F.T."/>
            <person name="Brugliera F."/>
            <person name="Anderson M.A."/>
        </authorList>
    </citation>
    <scope>NUCLEOTIDE SEQUENCE [MRNA]</scope>
    <scope>PROTEIN SEQUENCE OF 26-33</scope>
    <source>
        <strain>cv. Old Glory Blue</strain>
    </source>
</reference>
<evidence type="ECO:0000250" key="1"/>
<evidence type="ECO:0000269" key="2">
    <source>
    </source>
</evidence>
<evidence type="ECO:0000305" key="3"/>
<sequence>MARSICFFAVAILALMLFAAYETEAGTCKAECPTWEGICINKAPCVKCCKAQPEKFTDGHCSKILRRCLCTKPCATEEATATLANEVKTMAEALVEEDMME</sequence>
<proteinExistence type="evidence at protein level"/>
<organism>
    <name type="scientific">Petunia hybrida</name>
    <name type="common">Petunia</name>
    <dbReference type="NCBI Taxonomy" id="4102"/>
    <lineage>
        <taxon>Eukaryota</taxon>
        <taxon>Viridiplantae</taxon>
        <taxon>Streptophyta</taxon>
        <taxon>Embryophyta</taxon>
        <taxon>Tracheophyta</taxon>
        <taxon>Spermatophyta</taxon>
        <taxon>Magnoliopsida</taxon>
        <taxon>eudicotyledons</taxon>
        <taxon>Gunneridae</taxon>
        <taxon>Pentapetalae</taxon>
        <taxon>asterids</taxon>
        <taxon>lamiids</taxon>
        <taxon>Solanales</taxon>
        <taxon>Solanaceae</taxon>
        <taxon>Petunioideae</taxon>
        <taxon>Petunia</taxon>
    </lineage>
</organism>